<feature type="chain" id="PRO_0000349535" description="tRNA-specific 2-thiouridylase MnmA">
    <location>
        <begin position="1"/>
        <end position="407"/>
    </location>
</feature>
<feature type="region of interest" description="Interaction with tRNA" evidence="1">
    <location>
        <begin position="160"/>
        <end position="162"/>
    </location>
</feature>
<feature type="active site" description="Nucleophile" evidence="1">
    <location>
        <position position="114"/>
    </location>
</feature>
<feature type="active site" description="Cysteine persulfide intermediate" evidence="1">
    <location>
        <position position="210"/>
    </location>
</feature>
<feature type="binding site" evidence="1">
    <location>
        <begin position="20"/>
        <end position="27"/>
    </location>
    <ligand>
        <name>ATP</name>
        <dbReference type="ChEBI" id="CHEBI:30616"/>
    </ligand>
</feature>
<feature type="binding site" evidence="1">
    <location>
        <position position="46"/>
    </location>
    <ligand>
        <name>ATP</name>
        <dbReference type="ChEBI" id="CHEBI:30616"/>
    </ligand>
</feature>
<feature type="binding site" evidence="1">
    <location>
        <position position="138"/>
    </location>
    <ligand>
        <name>ATP</name>
        <dbReference type="ChEBI" id="CHEBI:30616"/>
    </ligand>
</feature>
<feature type="site" description="Interaction with tRNA" evidence="1">
    <location>
        <position position="139"/>
    </location>
</feature>
<feature type="site" description="Interaction with tRNA" evidence="1">
    <location>
        <position position="352"/>
    </location>
</feature>
<feature type="disulfide bond" description="Alternate" evidence="1">
    <location>
        <begin position="114"/>
        <end position="210"/>
    </location>
</feature>
<evidence type="ECO:0000255" key="1">
    <source>
        <dbReference type="HAMAP-Rule" id="MF_00144"/>
    </source>
</evidence>
<name>MNMA_BART1</name>
<sequence>MFLNSLDLPGQPEDSRIVVAMSGGVDSSVVAGLLKREGYNVIGITLQLYDHGAATHRVGACCAGQDIEDARRVAEMLGIPHYVLDYEKRFREAVIDPFAESYAHGETPVPCIACNQTVKFADLLATARELGADALATGHYIRSRSHGAHRALFRPLDNDRDQSYFLFATTQEQIDYLRFPLGDLPKARVREIAAEMGLVVANKHDSQDICFVPQGKYSDVIAKLRPEAANPGFIVHIDGKILGKHSGIVNYTVGQRRGIGVSTGEALYVVYLDVENARVIVGPREMLETHKLFLRDVNWLGDESLDNFPSQGIEVAVKVRSTRPPHLACLHYKEGVFSVDLLECENGVAPGQACVLYDGNGHEARILGGGFVTHSERAADIEVMLKRVLCNLETKDSVSSQLKTTAS</sequence>
<reference key="1">
    <citation type="journal article" date="2007" name="Nat. Genet.">
        <title>Genomic analysis of Bartonella identifies type IV secretion systems as host adaptability factors.</title>
        <authorList>
            <person name="Saenz H.L."/>
            <person name="Engel P."/>
            <person name="Stoeckli M.C."/>
            <person name="Lanz C."/>
            <person name="Raddatz G."/>
            <person name="Vayssier-Taussat M."/>
            <person name="Birtles R."/>
            <person name="Schuster S.C."/>
            <person name="Dehio C."/>
        </authorList>
    </citation>
    <scope>NUCLEOTIDE SEQUENCE [LARGE SCALE GENOMIC DNA]</scope>
    <source>
        <strain>CIP 105476 / IBS 506</strain>
    </source>
</reference>
<proteinExistence type="inferred from homology"/>
<protein>
    <recommendedName>
        <fullName evidence="1">tRNA-specific 2-thiouridylase MnmA</fullName>
        <ecNumber evidence="1">2.8.1.13</ecNumber>
    </recommendedName>
</protein>
<comment type="function">
    <text evidence="1">Catalyzes the 2-thiolation of uridine at the wobble position (U34) of tRNA, leading to the formation of s(2)U34.</text>
</comment>
<comment type="catalytic activity">
    <reaction evidence="1">
        <text>S-sulfanyl-L-cysteinyl-[protein] + uridine(34) in tRNA + AH2 + ATP = 2-thiouridine(34) in tRNA + L-cysteinyl-[protein] + A + AMP + diphosphate + H(+)</text>
        <dbReference type="Rhea" id="RHEA:47032"/>
        <dbReference type="Rhea" id="RHEA-COMP:10131"/>
        <dbReference type="Rhea" id="RHEA-COMP:11726"/>
        <dbReference type="Rhea" id="RHEA-COMP:11727"/>
        <dbReference type="Rhea" id="RHEA-COMP:11728"/>
        <dbReference type="ChEBI" id="CHEBI:13193"/>
        <dbReference type="ChEBI" id="CHEBI:15378"/>
        <dbReference type="ChEBI" id="CHEBI:17499"/>
        <dbReference type="ChEBI" id="CHEBI:29950"/>
        <dbReference type="ChEBI" id="CHEBI:30616"/>
        <dbReference type="ChEBI" id="CHEBI:33019"/>
        <dbReference type="ChEBI" id="CHEBI:61963"/>
        <dbReference type="ChEBI" id="CHEBI:65315"/>
        <dbReference type="ChEBI" id="CHEBI:87170"/>
        <dbReference type="ChEBI" id="CHEBI:456215"/>
        <dbReference type="EC" id="2.8.1.13"/>
    </reaction>
</comment>
<comment type="subcellular location">
    <subcellularLocation>
        <location evidence="1">Cytoplasm</location>
    </subcellularLocation>
</comment>
<comment type="similarity">
    <text evidence="1">Belongs to the MnmA/TRMU family.</text>
</comment>
<organism>
    <name type="scientific">Bartonella tribocorum (strain CIP 105476 / IBS 506)</name>
    <dbReference type="NCBI Taxonomy" id="382640"/>
    <lineage>
        <taxon>Bacteria</taxon>
        <taxon>Pseudomonadati</taxon>
        <taxon>Pseudomonadota</taxon>
        <taxon>Alphaproteobacteria</taxon>
        <taxon>Hyphomicrobiales</taxon>
        <taxon>Bartonellaceae</taxon>
        <taxon>Bartonella</taxon>
    </lineage>
</organism>
<gene>
    <name evidence="1" type="primary">mnmA</name>
    <name type="ordered locus">BT_1637</name>
</gene>
<dbReference type="EC" id="2.8.1.13" evidence="1"/>
<dbReference type="EMBL" id="AM260525">
    <property type="protein sequence ID" value="CAK01970.1"/>
    <property type="molecule type" value="Genomic_DNA"/>
</dbReference>
<dbReference type="RefSeq" id="WP_012232090.1">
    <property type="nucleotide sequence ID" value="NC_010161.1"/>
</dbReference>
<dbReference type="SMR" id="A9IWH0"/>
<dbReference type="KEGG" id="btr:BT_1637"/>
<dbReference type="eggNOG" id="COG0482">
    <property type="taxonomic scope" value="Bacteria"/>
</dbReference>
<dbReference type="HOGENOM" id="CLU_035188_0_1_5"/>
<dbReference type="Proteomes" id="UP000001592">
    <property type="component" value="Chromosome"/>
</dbReference>
<dbReference type="GO" id="GO:0005737">
    <property type="term" value="C:cytoplasm"/>
    <property type="evidence" value="ECO:0007669"/>
    <property type="project" value="UniProtKB-SubCell"/>
</dbReference>
<dbReference type="GO" id="GO:0005524">
    <property type="term" value="F:ATP binding"/>
    <property type="evidence" value="ECO:0007669"/>
    <property type="project" value="UniProtKB-KW"/>
</dbReference>
<dbReference type="GO" id="GO:0000049">
    <property type="term" value="F:tRNA binding"/>
    <property type="evidence" value="ECO:0007669"/>
    <property type="project" value="UniProtKB-KW"/>
</dbReference>
<dbReference type="GO" id="GO:0103016">
    <property type="term" value="F:tRNA-uridine 2-sulfurtransferase activity"/>
    <property type="evidence" value="ECO:0007669"/>
    <property type="project" value="UniProtKB-EC"/>
</dbReference>
<dbReference type="GO" id="GO:0002143">
    <property type="term" value="P:tRNA wobble position uridine thiolation"/>
    <property type="evidence" value="ECO:0007669"/>
    <property type="project" value="TreeGrafter"/>
</dbReference>
<dbReference type="CDD" id="cd01998">
    <property type="entry name" value="MnmA_TRMU-like"/>
    <property type="match status" value="1"/>
</dbReference>
<dbReference type="FunFam" id="2.30.30.280:FF:000001">
    <property type="entry name" value="tRNA-specific 2-thiouridylase MnmA"/>
    <property type="match status" value="1"/>
</dbReference>
<dbReference type="FunFam" id="3.40.50.620:FF:000115">
    <property type="entry name" value="tRNA-specific 2-thiouridylase MnmA"/>
    <property type="match status" value="1"/>
</dbReference>
<dbReference type="Gene3D" id="2.30.30.280">
    <property type="entry name" value="Adenine nucleotide alpha hydrolases-like domains"/>
    <property type="match status" value="1"/>
</dbReference>
<dbReference type="Gene3D" id="3.40.50.620">
    <property type="entry name" value="HUPs"/>
    <property type="match status" value="1"/>
</dbReference>
<dbReference type="Gene3D" id="2.40.30.10">
    <property type="entry name" value="Translation factors"/>
    <property type="match status" value="1"/>
</dbReference>
<dbReference type="HAMAP" id="MF_00144">
    <property type="entry name" value="tRNA_thiouridyl_MnmA"/>
    <property type="match status" value="1"/>
</dbReference>
<dbReference type="InterPro" id="IPR004506">
    <property type="entry name" value="MnmA-like"/>
</dbReference>
<dbReference type="InterPro" id="IPR046885">
    <property type="entry name" value="MnmA-like_C"/>
</dbReference>
<dbReference type="InterPro" id="IPR046884">
    <property type="entry name" value="MnmA-like_central"/>
</dbReference>
<dbReference type="InterPro" id="IPR023382">
    <property type="entry name" value="MnmA-like_central_sf"/>
</dbReference>
<dbReference type="InterPro" id="IPR014729">
    <property type="entry name" value="Rossmann-like_a/b/a_fold"/>
</dbReference>
<dbReference type="NCBIfam" id="NF001138">
    <property type="entry name" value="PRK00143.1"/>
    <property type="match status" value="1"/>
</dbReference>
<dbReference type="NCBIfam" id="TIGR00420">
    <property type="entry name" value="trmU"/>
    <property type="match status" value="1"/>
</dbReference>
<dbReference type="PANTHER" id="PTHR11933:SF5">
    <property type="entry name" value="MITOCHONDRIAL TRNA-SPECIFIC 2-THIOURIDYLASE 1"/>
    <property type="match status" value="1"/>
</dbReference>
<dbReference type="PANTHER" id="PTHR11933">
    <property type="entry name" value="TRNA 5-METHYLAMINOMETHYL-2-THIOURIDYLATE -METHYLTRANSFERASE"/>
    <property type="match status" value="1"/>
</dbReference>
<dbReference type="Pfam" id="PF03054">
    <property type="entry name" value="tRNA_Me_trans"/>
    <property type="match status" value="1"/>
</dbReference>
<dbReference type="Pfam" id="PF20258">
    <property type="entry name" value="tRNA_Me_trans_C"/>
    <property type="match status" value="1"/>
</dbReference>
<dbReference type="Pfam" id="PF20259">
    <property type="entry name" value="tRNA_Me_trans_M"/>
    <property type="match status" value="1"/>
</dbReference>
<dbReference type="SUPFAM" id="SSF52402">
    <property type="entry name" value="Adenine nucleotide alpha hydrolases-like"/>
    <property type="match status" value="1"/>
</dbReference>
<accession>A9IWH0</accession>
<keyword id="KW-0067">ATP-binding</keyword>
<keyword id="KW-0963">Cytoplasm</keyword>
<keyword id="KW-1015">Disulfide bond</keyword>
<keyword id="KW-0547">Nucleotide-binding</keyword>
<keyword id="KW-0694">RNA-binding</keyword>
<keyword id="KW-0808">Transferase</keyword>
<keyword id="KW-0819">tRNA processing</keyword>
<keyword id="KW-0820">tRNA-binding</keyword>